<accession>A0A336U966</accession>
<keyword id="KW-0186">Copper</keyword>
<keyword id="KW-0256">Endoplasmic reticulum</keyword>
<keyword id="KW-0325">Glycoprotein</keyword>
<keyword id="KW-0333">Golgi apparatus</keyword>
<keyword id="KW-0479">Metal-binding</keyword>
<keyword id="KW-0560">Oxidoreductase</keyword>
<keyword id="KW-0732">Signal</keyword>
<gene>
    <name type="primary">tyrP</name>
</gene>
<feature type="signal peptide" evidence="2">
    <location>
        <begin position="1"/>
        <end position="19"/>
    </location>
</feature>
<feature type="chain" id="PRO_0000448624" description="Tyrosinase P" evidence="2">
    <location>
        <begin position="20"/>
        <end position="356"/>
    </location>
</feature>
<feature type="binding site" evidence="1">
    <location>
        <position position="87"/>
    </location>
    <ligand>
        <name>Cu cation</name>
        <dbReference type="ChEBI" id="CHEBI:23378"/>
        <label>A</label>
    </ligand>
</feature>
<feature type="binding site" evidence="1">
    <location>
        <position position="96"/>
    </location>
    <ligand>
        <name>Cu cation</name>
        <dbReference type="ChEBI" id="CHEBI:23378"/>
        <label>A</label>
    </ligand>
</feature>
<feature type="binding site" evidence="1">
    <location>
        <position position="203"/>
    </location>
    <ligand>
        <name>Cu cation</name>
        <dbReference type="ChEBI" id="CHEBI:23378"/>
        <label>B</label>
    </ligand>
</feature>
<feature type="binding site" evidence="1">
    <location>
        <position position="263"/>
    </location>
    <ligand>
        <name>Cu cation</name>
        <dbReference type="ChEBI" id="CHEBI:23378"/>
        <label>B</label>
    </ligand>
</feature>
<feature type="binding site" evidence="1">
    <location>
        <position position="286"/>
    </location>
    <ligand>
        <name>Cu cation</name>
        <dbReference type="ChEBI" id="CHEBI:23378"/>
        <label>B</label>
    </ligand>
</feature>
<feature type="glycosylation site" description="N-linked (GlcNAc...) asparagine" evidence="3">
    <location>
        <position position="81"/>
    </location>
</feature>
<feature type="glycosylation site" description="N-linked (GlcNAc...) asparagine" evidence="3">
    <location>
        <position position="148"/>
    </location>
</feature>
<feature type="glycosylation site" description="N-linked (GlcNAc...) asparagine" evidence="3">
    <location>
        <position position="193"/>
    </location>
</feature>
<feature type="glycosylation site" description="N-linked (GlcNAc...) asparagine" evidence="3">
    <location>
        <position position="226"/>
    </location>
</feature>
<feature type="glycosylation site" description="N-linked (GlcNAc...) asparagine" evidence="3">
    <location>
        <position position="309"/>
    </location>
</feature>
<comment type="function">
    <text evidence="4 5">Tyrosinase; part of the gene cluster that mediates the biosynthesis of Asp-melanin, a pigment that confers resistance against UV light and hampers phagocytosis by soil amoeba (PubMed:27133313, PubMed:29270299). The nonribosomal peptide synthase melA converts 4-hydroxyphenylpyruvate (4-HPPA) to aspulvinone E (PubMed:27133313, PubMed:29270299). The tyrosinase tyrP then performs hydroxylations of both aromatic moieties of aspulvinone E (PubMed:27133313). The product of tyrP is highly unstable, and, due to the high reactivity of methides and ortho-diquinones, the polymeric Asp-melanin forms spontaneously (PubMed:27133313).</text>
</comment>
<comment type="catalytic activity">
    <reaction evidence="4">
        <text>aspulvinone E + O2 = (5Z)-3-(3,4-dihydroxyphenyl)-5-[(3,4-dihydroxyphenyl)methylidene]-5-oxo-2,5-dihydrofuran-3-olate</text>
        <dbReference type="Rhea" id="RHEA:74195"/>
        <dbReference type="ChEBI" id="CHEBI:15379"/>
        <dbReference type="ChEBI" id="CHEBI:58240"/>
        <dbReference type="ChEBI" id="CHEBI:193114"/>
    </reaction>
    <physiologicalReaction direction="left-to-right" evidence="4">
        <dbReference type="Rhea" id="RHEA:74196"/>
    </physiologicalReaction>
</comment>
<comment type="catalytic activity">
    <reaction evidence="4">
        <text>aspulvinone E + O2 = (2Z)-2-[(3,4-dioxocyclohexa-1,5-dien-1-yl)methylidene]-4-(4-hydroxyphenyl)-5-oxo-2,5-dihydrofuran-3-olate + H2O</text>
        <dbReference type="Rhea" id="RHEA:74199"/>
        <dbReference type="ChEBI" id="CHEBI:15377"/>
        <dbReference type="ChEBI" id="CHEBI:15379"/>
        <dbReference type="ChEBI" id="CHEBI:58240"/>
        <dbReference type="ChEBI" id="CHEBI:193115"/>
    </reaction>
    <physiologicalReaction direction="left-to-right" evidence="4">
        <dbReference type="Rhea" id="RHEA:74200"/>
    </physiologicalReaction>
</comment>
<comment type="cofactor">
    <cofactor evidence="1">
        <name>Cu(2+)</name>
        <dbReference type="ChEBI" id="CHEBI:29036"/>
    </cofactor>
    <text evidence="1">Binds 2 copper ions per subunit.</text>
</comment>
<comment type="activity regulation">
    <text evidence="4">Activity is inhibited by the presence of dithiothreitol (DTT).</text>
</comment>
<comment type="biophysicochemical properties">
    <phDependence>
        <text evidence="4">Optimum pH is 5-7.</text>
    </phDependence>
</comment>
<comment type="subcellular location">
    <subcellularLocation>
        <location evidence="4 5">Endoplasmic reticulum lumen</location>
    </subcellularLocation>
    <subcellularLocation>
        <location evidence="4 5">Golgi apparatus lumen</location>
    </subcellularLocation>
    <text evidence="5">The oxidizing environment of Golgi or endoplasmic reticulum (ER) is required for tyrP to be active.</text>
</comment>
<comment type="induction">
    <text evidence="4">Expression is induced during conidiation.</text>
</comment>
<comment type="PTM">
    <text evidence="4">Glycosylated.</text>
</comment>
<comment type="disruption phenotype">
    <text evidence="4">Results in yellow fluorescent conidia and accumulates aspulvinone E in conidia.</text>
</comment>
<comment type="similarity">
    <text evidence="7">Belongs to the tyrosinase family.</text>
</comment>
<protein>
    <recommendedName>
        <fullName evidence="6">Tyrosinase P</fullName>
        <ecNumber evidence="4">1.14.18.-</ecNumber>
    </recommendedName>
</protein>
<proteinExistence type="evidence at protein level"/>
<organism>
    <name type="scientific">Aspergillus terreus</name>
    <dbReference type="NCBI Taxonomy" id="33178"/>
    <lineage>
        <taxon>Eukaryota</taxon>
        <taxon>Fungi</taxon>
        <taxon>Dikarya</taxon>
        <taxon>Ascomycota</taxon>
        <taxon>Pezizomycotina</taxon>
        <taxon>Eurotiomycetes</taxon>
        <taxon>Eurotiomycetidae</taxon>
        <taxon>Eurotiales</taxon>
        <taxon>Aspergillaceae</taxon>
        <taxon>Aspergillus</taxon>
        <taxon>Aspergillus subgen. Circumdati</taxon>
    </lineage>
</organism>
<sequence>MGFYRNLVLVAASCTQALGLCPAPRCDSPDIRHEWGELSREDRLSYISAVQCMKDRPPELSVEEVPAVRSRYDDFTAVHINYTLQIHNSGIFLPWHRHFIWLWEKALREECGFTGTLPYWDWVMWPNLAASPLFDGTETSLSGDGEFNATEQPTELNPEPGLTITIPRGAGGGCVRTGPFKDWVINMGPFAFNESYEPALPDHAFDYNPRCLVRSLNDWVIQTYNNQTVVDTLLDSPDIVEFQNIMGGFPNPPIPIGPHAMGHRSLGPDMLDFFASPQDPAFWQHHGMVDRLWTVWQDADEPWRRFALNGSSTTWYKDDTPEVTLQTTVEFGILDEPRPLYELMSPTAGPYCYTYT</sequence>
<dbReference type="EC" id="1.14.18.-" evidence="4"/>
<dbReference type="EMBL" id="KU530118">
    <property type="protein sequence ID" value="AND66116.1"/>
    <property type="molecule type" value="Genomic_DNA"/>
</dbReference>
<dbReference type="SMR" id="A0A336U966"/>
<dbReference type="GlyCosmos" id="A0A336U966">
    <property type="glycosylation" value="5 sites, No reported glycans"/>
</dbReference>
<dbReference type="VEuPathDB" id="FungiDB:ATEG_03564"/>
<dbReference type="GO" id="GO:0005788">
    <property type="term" value="C:endoplasmic reticulum lumen"/>
    <property type="evidence" value="ECO:0007669"/>
    <property type="project" value="UniProtKB-SubCell"/>
</dbReference>
<dbReference type="GO" id="GO:0005796">
    <property type="term" value="C:Golgi lumen"/>
    <property type="evidence" value="ECO:0007669"/>
    <property type="project" value="UniProtKB-SubCell"/>
</dbReference>
<dbReference type="GO" id="GO:0046872">
    <property type="term" value="F:metal ion binding"/>
    <property type="evidence" value="ECO:0007669"/>
    <property type="project" value="UniProtKB-KW"/>
</dbReference>
<dbReference type="GO" id="GO:0016491">
    <property type="term" value="F:oxidoreductase activity"/>
    <property type="evidence" value="ECO:0007669"/>
    <property type="project" value="UniProtKB-KW"/>
</dbReference>
<dbReference type="Gene3D" id="1.10.1280.10">
    <property type="entry name" value="Di-copper center containing domain from catechol oxidase"/>
    <property type="match status" value="1"/>
</dbReference>
<dbReference type="InterPro" id="IPR008922">
    <property type="entry name" value="Di-copper_centre_dom_sf"/>
</dbReference>
<dbReference type="InterPro" id="IPR050316">
    <property type="entry name" value="Tyrosinase/Hemocyanin"/>
</dbReference>
<dbReference type="InterPro" id="IPR002227">
    <property type="entry name" value="Tyrosinase_Cu-bd"/>
</dbReference>
<dbReference type="PANTHER" id="PTHR11474:SF125">
    <property type="entry name" value="N-ACETYL-6-HYDROXYTRYPTOPHAN OXIDASE IVOB-RELATED"/>
    <property type="match status" value="1"/>
</dbReference>
<dbReference type="PANTHER" id="PTHR11474">
    <property type="entry name" value="TYROSINASE FAMILY MEMBER"/>
    <property type="match status" value="1"/>
</dbReference>
<dbReference type="Pfam" id="PF00264">
    <property type="entry name" value="Tyrosinase"/>
    <property type="match status" value="1"/>
</dbReference>
<dbReference type="PRINTS" id="PR00092">
    <property type="entry name" value="TYROSINASE"/>
</dbReference>
<dbReference type="SUPFAM" id="SSF48056">
    <property type="entry name" value="Di-copper centre-containing domain"/>
    <property type="match status" value="1"/>
</dbReference>
<dbReference type="PROSITE" id="PS00498">
    <property type="entry name" value="TYROSINASE_2"/>
    <property type="match status" value="1"/>
</dbReference>
<reference key="1">
    <citation type="journal article" date="2016" name="Cell Chem. Biol.">
        <title>A non-canonical melanin biosynthesis pathway protects Aspergillus terreus conidia from environmental stress.</title>
        <authorList>
            <person name="Geib E."/>
            <person name="Gressler M."/>
            <person name="Viediernikova I."/>
            <person name="Hillmann F."/>
            <person name="Jacobsen I.D."/>
            <person name="Nietzsche S."/>
            <person name="Hertweck C."/>
            <person name="Brock M."/>
        </authorList>
    </citation>
    <scope>NUCLEOTIDE SEQUENCE [GENOMIC DNA]</scope>
    <scope>INDUCTION</scope>
    <scope>DISRUPTION PHENOTYPE</scope>
    <scope>SUBCELLULAR LOCATION</scope>
    <scope>GLYCOSYLATION</scope>
    <scope>FUNCTION</scope>
    <scope>CATALYTIC ACTIVITY</scope>
    <scope>BIOPHYSICOCHEMICAL PROPERTIES</scope>
    <scope>ACTIVITY REGULATION</scope>
    <source>
        <strain>SBUG844</strain>
    </source>
</reference>
<reference key="2">
    <citation type="journal article" date="2017" name="Fungal Biol. Biotechnol.">
        <title>ATNT: an enhanced system for expression of polycistronic secondary metabolite gene clusters in Aspergillus niger.</title>
        <authorList>
            <person name="Geib E."/>
            <person name="Brock M."/>
        </authorList>
    </citation>
    <scope>FUNCTION</scope>
    <scope>SUBCELLULAR LOCATION</scope>
</reference>
<evidence type="ECO:0000250" key="1">
    <source>
        <dbReference type="UniProtKB" id="Q9ZP19"/>
    </source>
</evidence>
<evidence type="ECO:0000255" key="2"/>
<evidence type="ECO:0000255" key="3">
    <source>
        <dbReference type="PROSITE-ProRule" id="PRU00498"/>
    </source>
</evidence>
<evidence type="ECO:0000269" key="4">
    <source>
    </source>
</evidence>
<evidence type="ECO:0000269" key="5">
    <source>
    </source>
</evidence>
<evidence type="ECO:0000303" key="6">
    <source>
    </source>
</evidence>
<evidence type="ECO:0000305" key="7"/>
<name>TYRP_ASPTE</name>